<gene>
    <name type="primary">ypel3</name>
    <name type="synonym">ypela</name>
</gene>
<organism>
    <name type="scientific">Oryzias latipes</name>
    <name type="common">Japanese rice fish</name>
    <name type="synonym">Japanese killifish</name>
    <dbReference type="NCBI Taxonomy" id="8090"/>
    <lineage>
        <taxon>Eukaryota</taxon>
        <taxon>Metazoa</taxon>
        <taxon>Chordata</taxon>
        <taxon>Craniata</taxon>
        <taxon>Vertebrata</taxon>
        <taxon>Euteleostomi</taxon>
        <taxon>Actinopterygii</taxon>
        <taxon>Neopterygii</taxon>
        <taxon>Teleostei</taxon>
        <taxon>Neoteleostei</taxon>
        <taxon>Acanthomorphata</taxon>
        <taxon>Ovalentaria</taxon>
        <taxon>Atherinomorphae</taxon>
        <taxon>Beloniformes</taxon>
        <taxon>Adrianichthyidae</taxon>
        <taxon>Oryziinae</taxon>
        <taxon>Oryzias</taxon>
    </lineage>
</organism>
<evidence type="ECO:0000250" key="1"/>
<evidence type="ECO:0000255" key="2">
    <source>
        <dbReference type="PROSITE-ProRule" id="PRU01128"/>
    </source>
</evidence>
<evidence type="ECO:0000305" key="3"/>
<proteinExistence type="inferred from homology"/>
<sequence length="119" mass="13617">MVKLTKAKTFQAYLDSCHRRYSCVHCRAHLANHDDLISKSFQGSQGRAYLFNSVVNVGCGPAEERLLLTGLHAVADIYCENCHTTLGWKYEQAFELSQKYKEGKYIIELSHMIKDNGWD</sequence>
<dbReference type="EMBL" id="AB160982">
    <property type="protein sequence ID" value="BAD51391.1"/>
    <property type="molecule type" value="mRNA"/>
</dbReference>
<dbReference type="RefSeq" id="NP_001098180.1">
    <property type="nucleotide sequence ID" value="NM_001104710.1"/>
</dbReference>
<dbReference type="SMR" id="Q65Z54"/>
<dbReference type="FunCoup" id="Q65Z54">
    <property type="interactions" value="438"/>
</dbReference>
<dbReference type="STRING" id="8090.ENSORLP00000041112"/>
<dbReference type="Ensembl" id="ENSORLT00000014926.2">
    <property type="protein sequence ID" value="ENSORLP00000014925.1"/>
    <property type="gene ID" value="ENSORLG00000011915.2"/>
</dbReference>
<dbReference type="Ensembl" id="ENSORLT00000034522.1">
    <property type="protein sequence ID" value="ENSORLP00000040474.1"/>
    <property type="gene ID" value="ENSORLG00000011915.2"/>
</dbReference>
<dbReference type="Ensembl" id="ENSORLT00015013573.1">
    <property type="protein sequence ID" value="ENSORLP00015022221.1"/>
    <property type="gene ID" value="ENSORLG00015001508.1"/>
</dbReference>
<dbReference type="Ensembl" id="ENSORLT00020018460.1">
    <property type="protein sequence ID" value="ENSORLP00020028805.1"/>
    <property type="gene ID" value="ENSORLG00020012491.1"/>
</dbReference>
<dbReference type="Ensembl" id="ENSORLT00020018463.1">
    <property type="protein sequence ID" value="ENSORLP00020028808.1"/>
    <property type="gene ID" value="ENSORLG00020012491.1"/>
</dbReference>
<dbReference type="GeneID" id="100049286"/>
<dbReference type="KEGG" id="ola:100049286"/>
<dbReference type="CTD" id="83719"/>
<dbReference type="eggNOG" id="KOG3399">
    <property type="taxonomic scope" value="Eukaryota"/>
</dbReference>
<dbReference type="GeneTree" id="ENSGT00940000161514"/>
<dbReference type="HOGENOM" id="CLU_043857_5_2_1"/>
<dbReference type="InParanoid" id="Q65Z54"/>
<dbReference type="OMA" id="CADCRQV"/>
<dbReference type="OrthoDB" id="6407410at2759"/>
<dbReference type="TreeFam" id="TF313936"/>
<dbReference type="Proteomes" id="UP000001038">
    <property type="component" value="Chromosome 8"/>
</dbReference>
<dbReference type="Proteomes" id="UP000265180">
    <property type="component" value="Chromosome 8"/>
</dbReference>
<dbReference type="Proteomes" id="UP000265200">
    <property type="component" value="Chromosome 8"/>
</dbReference>
<dbReference type="Bgee" id="ENSORLG00000011915">
    <property type="expression patterns" value="Expressed in blastula and 14 other cell types or tissues"/>
</dbReference>
<dbReference type="GO" id="GO:0005730">
    <property type="term" value="C:nucleolus"/>
    <property type="evidence" value="ECO:0007669"/>
    <property type="project" value="UniProtKB-SubCell"/>
</dbReference>
<dbReference type="GO" id="GO:0046872">
    <property type="term" value="F:metal ion binding"/>
    <property type="evidence" value="ECO:0007669"/>
    <property type="project" value="UniProtKB-KW"/>
</dbReference>
<dbReference type="GO" id="GO:0006915">
    <property type="term" value="P:apoptotic process"/>
    <property type="evidence" value="ECO:0007669"/>
    <property type="project" value="UniProtKB-KW"/>
</dbReference>
<dbReference type="InterPro" id="IPR034751">
    <property type="entry name" value="Yippee"/>
</dbReference>
<dbReference type="InterPro" id="IPR004910">
    <property type="entry name" value="Yippee/Mis18/Cereblon"/>
</dbReference>
<dbReference type="InterPro" id="IPR039058">
    <property type="entry name" value="Yippee_fam"/>
</dbReference>
<dbReference type="PANTHER" id="PTHR13848">
    <property type="entry name" value="PROTEIN YIPPEE-LIKE CG15309-RELATED"/>
    <property type="match status" value="1"/>
</dbReference>
<dbReference type="Pfam" id="PF03226">
    <property type="entry name" value="Yippee-Mis18"/>
    <property type="match status" value="1"/>
</dbReference>
<dbReference type="PROSITE" id="PS51792">
    <property type="entry name" value="YIPPEE"/>
    <property type="match status" value="1"/>
</dbReference>
<reference key="1">
    <citation type="journal article" date="2004" name="Gene">
        <title>Identification and characterization of a novel gene family YPEL in a wide spectrum of eukaryotic species.</title>
        <authorList>
            <person name="Hosono K."/>
            <person name="Sasaki T."/>
            <person name="Minoshima S."/>
            <person name="Shimizu N."/>
        </authorList>
    </citation>
    <scope>NUCLEOTIDE SEQUENCE [MRNA]</scope>
    <source>
        <strain>Cab</strain>
    </source>
</reference>
<accession>Q65Z54</accession>
<name>YPEL3_ORYLA</name>
<protein>
    <recommendedName>
        <fullName>Protein yippee-like 3</fullName>
    </recommendedName>
    <alternativeName>
        <fullName>Protein yippee-like a</fullName>
    </alternativeName>
</protein>
<keyword id="KW-0053">Apoptosis</keyword>
<keyword id="KW-0479">Metal-binding</keyword>
<keyword id="KW-0539">Nucleus</keyword>
<keyword id="KW-1185">Reference proteome</keyword>
<keyword id="KW-0862">Zinc</keyword>
<comment type="function">
    <text evidence="1">May be involved in proliferation and apoptosis in myeloid precursor cells.</text>
</comment>
<comment type="subcellular location">
    <subcellularLocation>
        <location evidence="1">Nucleus</location>
        <location evidence="1">Nucleolus</location>
    </subcellularLocation>
</comment>
<comment type="similarity">
    <text evidence="3">Belongs to the yippee family.</text>
</comment>
<feature type="chain" id="PRO_0000373879" description="Protein yippee-like 3">
    <location>
        <begin position="1"/>
        <end position="119"/>
    </location>
</feature>
<feature type="domain" description="Yippee" evidence="2">
    <location>
        <begin position="19"/>
        <end position="116"/>
    </location>
</feature>
<feature type="binding site" evidence="2">
    <location>
        <position position="23"/>
    </location>
    <ligand>
        <name>Zn(2+)</name>
        <dbReference type="ChEBI" id="CHEBI:29105"/>
    </ligand>
</feature>
<feature type="binding site" evidence="2">
    <location>
        <position position="26"/>
    </location>
    <ligand>
        <name>Zn(2+)</name>
        <dbReference type="ChEBI" id="CHEBI:29105"/>
    </ligand>
</feature>
<feature type="binding site" evidence="2">
    <location>
        <position position="79"/>
    </location>
    <ligand>
        <name>Zn(2+)</name>
        <dbReference type="ChEBI" id="CHEBI:29105"/>
    </ligand>
</feature>
<feature type="binding site" evidence="2">
    <location>
        <position position="82"/>
    </location>
    <ligand>
        <name>Zn(2+)</name>
        <dbReference type="ChEBI" id="CHEBI:29105"/>
    </ligand>
</feature>